<sequence>MAQTLYDKLWNTHVVHTEEDGTTLLYIDRQLLHEVTSPQAFEGLKIAQRPVWRISANLAVSDHNVPTTDRSHGIADPVSKLQVDTLDANCDAFGITQFKMNDVRQGIVHIIGPEQGATLPGMTIVCGDSHTSTHGAFGALAHGIGTSEVEHVLATQTLLQKKSKNMLVKVEGTLPRGCTAKDIVLAIIGKIGTAGGTGYAIEFGGSTIRALTMEGRMTVCNMAIEAGARAGMVAVDDTTIDYLKGRPFVPTGAEWNQAVEYWRQFKSDDGAQFDRVVELNAAEIVPQVTWGTSPEMVTSIDGRVPDPEREKDPVKRDAMERALAYMALEPNTPIESIKVDKIFIGSCTNARIEDIRAAAYVVKKLNRRVASNVRLAMVVPGSGLVKAQAEREGLDKVFTDAGFEWREPGCSMCLAMNADRLDPGERCASTSNRNFEGRQGAGGRTHLVSPAMAAAAAIEGHFVDIRQLG</sequence>
<reference key="1">
    <citation type="submission" date="2005-10" db="EMBL/GenBank/DDBJ databases">
        <title>Complete sequence of chromosome 2 of Burkholderia sp. 383.</title>
        <authorList>
            <consortium name="US DOE Joint Genome Institute"/>
            <person name="Copeland A."/>
            <person name="Lucas S."/>
            <person name="Lapidus A."/>
            <person name="Barry K."/>
            <person name="Detter J.C."/>
            <person name="Glavina T."/>
            <person name="Hammon N."/>
            <person name="Israni S."/>
            <person name="Pitluck S."/>
            <person name="Chain P."/>
            <person name="Malfatti S."/>
            <person name="Shin M."/>
            <person name="Vergez L."/>
            <person name="Schmutz J."/>
            <person name="Larimer F."/>
            <person name="Land M."/>
            <person name="Kyrpides N."/>
            <person name="Lykidis A."/>
            <person name="Richardson P."/>
        </authorList>
    </citation>
    <scope>NUCLEOTIDE SEQUENCE [LARGE SCALE GENOMIC DNA]</scope>
    <source>
        <strain>ATCC 17760 / DSM 23089 / LMG 22485 / NCIMB 9086 / R18194 / 383</strain>
    </source>
</reference>
<feature type="chain" id="PRO_1000063541" description="3-isopropylmalate dehydratase large subunit">
    <location>
        <begin position="1"/>
        <end position="469"/>
    </location>
</feature>
<feature type="binding site" evidence="1">
    <location>
        <position position="347"/>
    </location>
    <ligand>
        <name>[4Fe-4S] cluster</name>
        <dbReference type="ChEBI" id="CHEBI:49883"/>
    </ligand>
</feature>
<feature type="binding site" evidence="1">
    <location>
        <position position="410"/>
    </location>
    <ligand>
        <name>[4Fe-4S] cluster</name>
        <dbReference type="ChEBI" id="CHEBI:49883"/>
    </ligand>
</feature>
<feature type="binding site" evidence="1">
    <location>
        <position position="413"/>
    </location>
    <ligand>
        <name>[4Fe-4S] cluster</name>
        <dbReference type="ChEBI" id="CHEBI:49883"/>
    </ligand>
</feature>
<proteinExistence type="inferred from homology"/>
<accession>Q393X2</accession>
<gene>
    <name evidence="1" type="primary">leuC</name>
    <name type="ordered locus">Bcep18194_B2133</name>
</gene>
<organism>
    <name type="scientific">Burkholderia lata (strain ATCC 17760 / DSM 23089 / LMG 22485 / NCIMB 9086 / R18194 / 383)</name>
    <dbReference type="NCBI Taxonomy" id="482957"/>
    <lineage>
        <taxon>Bacteria</taxon>
        <taxon>Pseudomonadati</taxon>
        <taxon>Pseudomonadota</taxon>
        <taxon>Betaproteobacteria</taxon>
        <taxon>Burkholderiales</taxon>
        <taxon>Burkholderiaceae</taxon>
        <taxon>Burkholderia</taxon>
        <taxon>Burkholderia cepacia complex</taxon>
    </lineage>
</organism>
<keyword id="KW-0004">4Fe-4S</keyword>
<keyword id="KW-0028">Amino-acid biosynthesis</keyword>
<keyword id="KW-0100">Branched-chain amino acid biosynthesis</keyword>
<keyword id="KW-0408">Iron</keyword>
<keyword id="KW-0411">Iron-sulfur</keyword>
<keyword id="KW-0432">Leucine biosynthesis</keyword>
<keyword id="KW-0456">Lyase</keyword>
<keyword id="KW-0479">Metal-binding</keyword>
<comment type="function">
    <text evidence="1">Catalyzes the isomerization between 2-isopropylmalate and 3-isopropylmalate, via the formation of 2-isopropylmaleate.</text>
</comment>
<comment type="catalytic activity">
    <reaction evidence="1">
        <text>(2R,3S)-3-isopropylmalate = (2S)-2-isopropylmalate</text>
        <dbReference type="Rhea" id="RHEA:32287"/>
        <dbReference type="ChEBI" id="CHEBI:1178"/>
        <dbReference type="ChEBI" id="CHEBI:35121"/>
        <dbReference type="EC" id="4.2.1.33"/>
    </reaction>
</comment>
<comment type="cofactor">
    <cofactor evidence="1">
        <name>[4Fe-4S] cluster</name>
        <dbReference type="ChEBI" id="CHEBI:49883"/>
    </cofactor>
    <text evidence="1">Binds 1 [4Fe-4S] cluster per subunit.</text>
</comment>
<comment type="pathway">
    <text evidence="1">Amino-acid biosynthesis; L-leucine biosynthesis; L-leucine from 3-methyl-2-oxobutanoate: step 2/4.</text>
</comment>
<comment type="subunit">
    <text evidence="1">Heterodimer of LeuC and LeuD.</text>
</comment>
<comment type="similarity">
    <text evidence="1">Belongs to the aconitase/IPM isomerase family. LeuC type 1 subfamily.</text>
</comment>
<protein>
    <recommendedName>
        <fullName evidence="1">3-isopropylmalate dehydratase large subunit</fullName>
        <ecNumber evidence="1">4.2.1.33</ecNumber>
    </recommendedName>
    <alternativeName>
        <fullName evidence="1">Alpha-IPM isomerase</fullName>
        <shortName evidence="1">IPMI</shortName>
    </alternativeName>
    <alternativeName>
        <fullName evidence="1">Isopropylmalate isomerase</fullName>
    </alternativeName>
</protein>
<name>LEUC_BURL3</name>
<evidence type="ECO:0000255" key="1">
    <source>
        <dbReference type="HAMAP-Rule" id="MF_01026"/>
    </source>
</evidence>
<dbReference type="EC" id="4.2.1.33" evidence="1"/>
<dbReference type="EMBL" id="CP000152">
    <property type="protein sequence ID" value="ABB12244.1"/>
    <property type="molecule type" value="Genomic_DNA"/>
</dbReference>
<dbReference type="RefSeq" id="WP_011355727.1">
    <property type="nucleotide sequence ID" value="NC_007511.1"/>
</dbReference>
<dbReference type="SMR" id="Q393X2"/>
<dbReference type="GeneID" id="45098461"/>
<dbReference type="KEGG" id="bur:Bcep18194_B2133"/>
<dbReference type="PATRIC" id="fig|482957.22.peg.5889"/>
<dbReference type="HOGENOM" id="CLU_006714_3_4_4"/>
<dbReference type="UniPathway" id="UPA00048">
    <property type="reaction ID" value="UER00071"/>
</dbReference>
<dbReference type="Proteomes" id="UP000002705">
    <property type="component" value="Chromosome 2"/>
</dbReference>
<dbReference type="GO" id="GO:0003861">
    <property type="term" value="F:3-isopropylmalate dehydratase activity"/>
    <property type="evidence" value="ECO:0007669"/>
    <property type="project" value="UniProtKB-UniRule"/>
</dbReference>
<dbReference type="GO" id="GO:0051539">
    <property type="term" value="F:4 iron, 4 sulfur cluster binding"/>
    <property type="evidence" value="ECO:0007669"/>
    <property type="project" value="UniProtKB-KW"/>
</dbReference>
<dbReference type="GO" id="GO:0046872">
    <property type="term" value="F:metal ion binding"/>
    <property type="evidence" value="ECO:0007669"/>
    <property type="project" value="UniProtKB-KW"/>
</dbReference>
<dbReference type="GO" id="GO:0009098">
    <property type="term" value="P:L-leucine biosynthetic process"/>
    <property type="evidence" value="ECO:0007669"/>
    <property type="project" value="UniProtKB-UniRule"/>
</dbReference>
<dbReference type="CDD" id="cd01583">
    <property type="entry name" value="IPMI"/>
    <property type="match status" value="1"/>
</dbReference>
<dbReference type="FunFam" id="3.30.499.10:FF:000007">
    <property type="entry name" value="3-isopropylmalate dehydratase large subunit"/>
    <property type="match status" value="1"/>
</dbReference>
<dbReference type="Gene3D" id="3.30.499.10">
    <property type="entry name" value="Aconitase, domain 3"/>
    <property type="match status" value="2"/>
</dbReference>
<dbReference type="HAMAP" id="MF_01026">
    <property type="entry name" value="LeuC_type1"/>
    <property type="match status" value="1"/>
</dbReference>
<dbReference type="InterPro" id="IPR004430">
    <property type="entry name" value="3-IsopropMal_deHydase_lsu"/>
</dbReference>
<dbReference type="InterPro" id="IPR015931">
    <property type="entry name" value="Acnase/IPM_dHydase_lsu_aba_1/3"/>
</dbReference>
<dbReference type="InterPro" id="IPR001030">
    <property type="entry name" value="Acoase/IPM_deHydtase_lsu_aba"/>
</dbReference>
<dbReference type="InterPro" id="IPR018136">
    <property type="entry name" value="Aconitase_4Fe-4S_BS"/>
</dbReference>
<dbReference type="InterPro" id="IPR036008">
    <property type="entry name" value="Aconitase_4Fe-4S_dom"/>
</dbReference>
<dbReference type="InterPro" id="IPR050067">
    <property type="entry name" value="IPM_dehydratase_rel_enz"/>
</dbReference>
<dbReference type="InterPro" id="IPR033941">
    <property type="entry name" value="IPMI_cat"/>
</dbReference>
<dbReference type="NCBIfam" id="TIGR00170">
    <property type="entry name" value="leuC"/>
    <property type="match status" value="1"/>
</dbReference>
<dbReference type="NCBIfam" id="NF004016">
    <property type="entry name" value="PRK05478.1"/>
    <property type="match status" value="1"/>
</dbReference>
<dbReference type="NCBIfam" id="NF009116">
    <property type="entry name" value="PRK12466.1"/>
    <property type="match status" value="1"/>
</dbReference>
<dbReference type="PANTHER" id="PTHR43822:SF9">
    <property type="entry name" value="3-ISOPROPYLMALATE DEHYDRATASE"/>
    <property type="match status" value="1"/>
</dbReference>
<dbReference type="PANTHER" id="PTHR43822">
    <property type="entry name" value="HOMOACONITASE, MITOCHONDRIAL-RELATED"/>
    <property type="match status" value="1"/>
</dbReference>
<dbReference type="Pfam" id="PF00330">
    <property type="entry name" value="Aconitase"/>
    <property type="match status" value="1"/>
</dbReference>
<dbReference type="PRINTS" id="PR00415">
    <property type="entry name" value="ACONITASE"/>
</dbReference>
<dbReference type="SUPFAM" id="SSF53732">
    <property type="entry name" value="Aconitase iron-sulfur domain"/>
    <property type="match status" value="1"/>
</dbReference>
<dbReference type="PROSITE" id="PS00450">
    <property type="entry name" value="ACONITASE_1"/>
    <property type="match status" value="1"/>
</dbReference>
<dbReference type="PROSITE" id="PS01244">
    <property type="entry name" value="ACONITASE_2"/>
    <property type="match status" value="1"/>
</dbReference>